<feature type="chain" id="PRO_0000277173" description="DNA-directed RNA polymerase subunit beta'">
    <location>
        <begin position="1"/>
        <end position="740"/>
    </location>
</feature>
<feature type="binding site" evidence="1">
    <location>
        <position position="65"/>
    </location>
    <ligand>
        <name>Zn(2+)</name>
        <dbReference type="ChEBI" id="CHEBI:29105"/>
    </ligand>
</feature>
<feature type="binding site" evidence="1">
    <location>
        <position position="67"/>
    </location>
    <ligand>
        <name>Zn(2+)</name>
        <dbReference type="ChEBI" id="CHEBI:29105"/>
    </ligand>
</feature>
<feature type="binding site" evidence="1">
    <location>
        <position position="103"/>
    </location>
    <ligand>
        <name>Zn(2+)</name>
        <dbReference type="ChEBI" id="CHEBI:29105"/>
    </ligand>
</feature>
<feature type="binding site" evidence="1">
    <location>
        <position position="106"/>
    </location>
    <ligand>
        <name>Zn(2+)</name>
        <dbReference type="ChEBI" id="CHEBI:29105"/>
    </ligand>
</feature>
<feature type="binding site" evidence="1">
    <location>
        <position position="539"/>
    </location>
    <ligand>
        <name>Mg(2+)</name>
        <dbReference type="ChEBI" id="CHEBI:18420"/>
    </ligand>
</feature>
<feature type="binding site" evidence="1">
    <location>
        <position position="541"/>
    </location>
    <ligand>
        <name>Mg(2+)</name>
        <dbReference type="ChEBI" id="CHEBI:18420"/>
    </ligand>
</feature>
<feature type="binding site" evidence="1">
    <location>
        <position position="543"/>
    </location>
    <ligand>
        <name>Mg(2+)</name>
        <dbReference type="ChEBI" id="CHEBI:18420"/>
    </ligand>
</feature>
<sequence length="740" mass="84558">MSIEYVQLQLASPSEIKRWSQRILPTGEVVGEISKADTINYRTFKPERGGLFCERIFGSTSNGECSCGKTKRRKLIVPVNFNRLTLQKRNAELEATQAIIEVCPSCGVEPTNSKVRRYRMGCISLKKPVAHMWYFRNSPNVLAALLNMRSQEIDETIHFQTYTPSKYGTQNYCLHGGVQWYVNHWEPMHPYFAGDIDVSMDKAASWNSKSTFMPSQIKTIENCGGEALQELLTRLDLVFLQRMLSRKLKNTIEKKKLAAKSLRKRHKRRKTAKLLGRTDQKNYGITIKVREYSRRLEFIRSLARKGLRPEWMILSIFPVLPPDLRPMIQMSSGRFATSDLNDLYRRLIYRKIRFEKFLTLFDEEFLPDLLIRHDLCLLQEAADSIIDNGRLDKPAQRPNRKPFKSLTSIIEGKHGRFRQNLLGKRVDYSGRSVIVVGPKLRLHQCGLPREMALELFQPFVIRALLEESGVKNIRAAKNLLQRRSQMVWDILDTVVLGHPVLLNRAPTLHRLGIQAFEPILLSGRAIQLHPLVCPAFNADFDGDQMAVHVPLGLEAQAEARLLMLATHNWLSPATGEPSILPSQDMILGFYYLTTLKPTVSLKRPVEQPMAVRGRNLIQSNSIFNNFESVLHAYETSKVDLHEIIWLRWSSYIQTTNSEPLQITVNKTGHVTTVYDSFVMQSGATNGPDNSMLSVQMKSRDTSSISKVYNCLTSLNAAAFYILTTPGRVLFNNLIYENLFL</sequence>
<evidence type="ECO:0000255" key="1">
    <source>
        <dbReference type="HAMAP-Rule" id="MF_01323"/>
    </source>
</evidence>
<protein>
    <recommendedName>
        <fullName evidence="1">DNA-directed RNA polymerase subunit beta'</fullName>
        <ecNumber evidence="1">2.7.7.6</ecNumber>
    </recommendedName>
    <alternativeName>
        <fullName evidence="1">PEP</fullName>
    </alternativeName>
    <alternativeName>
        <fullName evidence="1">Plastid-encoded RNA polymerase subunit beta'</fullName>
        <shortName evidence="1">RNA polymerase subunit beta'</shortName>
    </alternativeName>
</protein>
<keyword id="KW-0150">Chloroplast</keyword>
<keyword id="KW-0240">DNA-directed RNA polymerase</keyword>
<keyword id="KW-0460">Magnesium</keyword>
<keyword id="KW-0479">Metal-binding</keyword>
<keyword id="KW-0548">Nucleotidyltransferase</keyword>
<keyword id="KW-0934">Plastid</keyword>
<keyword id="KW-1185">Reference proteome</keyword>
<keyword id="KW-0804">Transcription</keyword>
<keyword id="KW-0808">Transferase</keyword>
<keyword id="KW-0862">Zinc</keyword>
<gene>
    <name evidence="1" type="primary">rpoC1</name>
    <name type="ordered locus">OtCpg00270</name>
</gene>
<dbReference type="EC" id="2.7.7.6" evidence="1"/>
<dbReference type="EMBL" id="CR954199">
    <property type="protein sequence ID" value="CAL36352.1"/>
    <property type="molecule type" value="Genomic_DNA"/>
</dbReference>
<dbReference type="RefSeq" id="YP_717230.1">
    <property type="nucleotide sequence ID" value="NC_008289.1"/>
</dbReference>
<dbReference type="SMR" id="Q0P3M5"/>
<dbReference type="FunCoup" id="Q0P3M5">
    <property type="interactions" value="40"/>
</dbReference>
<dbReference type="STRING" id="70448.Q0P3M5"/>
<dbReference type="GeneID" id="4238799"/>
<dbReference type="KEGG" id="ota:OstapCp27"/>
<dbReference type="eggNOG" id="ENOG502QPYA">
    <property type="taxonomic scope" value="Eukaryota"/>
</dbReference>
<dbReference type="InParanoid" id="Q0P3M5"/>
<dbReference type="Proteomes" id="UP000009170">
    <property type="component" value="Chloroplast"/>
</dbReference>
<dbReference type="GO" id="GO:0009507">
    <property type="term" value="C:chloroplast"/>
    <property type="evidence" value="ECO:0007669"/>
    <property type="project" value="UniProtKB-SubCell"/>
</dbReference>
<dbReference type="GO" id="GO:0000428">
    <property type="term" value="C:DNA-directed RNA polymerase complex"/>
    <property type="evidence" value="ECO:0007669"/>
    <property type="project" value="UniProtKB-KW"/>
</dbReference>
<dbReference type="GO" id="GO:0005739">
    <property type="term" value="C:mitochondrion"/>
    <property type="evidence" value="ECO:0007669"/>
    <property type="project" value="GOC"/>
</dbReference>
<dbReference type="GO" id="GO:0003677">
    <property type="term" value="F:DNA binding"/>
    <property type="evidence" value="ECO:0007669"/>
    <property type="project" value="UniProtKB-UniRule"/>
</dbReference>
<dbReference type="GO" id="GO:0003899">
    <property type="term" value="F:DNA-directed RNA polymerase activity"/>
    <property type="evidence" value="ECO:0007669"/>
    <property type="project" value="UniProtKB-UniRule"/>
</dbReference>
<dbReference type="GO" id="GO:0000287">
    <property type="term" value="F:magnesium ion binding"/>
    <property type="evidence" value="ECO:0007669"/>
    <property type="project" value="UniProtKB-UniRule"/>
</dbReference>
<dbReference type="GO" id="GO:0008270">
    <property type="term" value="F:zinc ion binding"/>
    <property type="evidence" value="ECO:0007669"/>
    <property type="project" value="UniProtKB-UniRule"/>
</dbReference>
<dbReference type="GO" id="GO:0006351">
    <property type="term" value="P:DNA-templated transcription"/>
    <property type="evidence" value="ECO:0007669"/>
    <property type="project" value="UniProtKB-UniRule"/>
</dbReference>
<dbReference type="Gene3D" id="1.10.40.90">
    <property type="match status" value="1"/>
</dbReference>
<dbReference type="Gene3D" id="2.40.40.20">
    <property type="match status" value="1"/>
</dbReference>
<dbReference type="Gene3D" id="4.10.860.120">
    <property type="entry name" value="RNA polymerase II, clamp domain"/>
    <property type="match status" value="1"/>
</dbReference>
<dbReference type="Gene3D" id="1.10.274.100">
    <property type="entry name" value="RNA polymerase Rpb1, domain 3"/>
    <property type="match status" value="1"/>
</dbReference>
<dbReference type="HAMAP" id="MF_01323">
    <property type="entry name" value="RNApol_bact_RpoC1"/>
    <property type="match status" value="1"/>
</dbReference>
<dbReference type="InterPro" id="IPR045867">
    <property type="entry name" value="DNA-dir_RpoC_beta_prime"/>
</dbReference>
<dbReference type="InterPro" id="IPR000722">
    <property type="entry name" value="RNA_pol_asu"/>
</dbReference>
<dbReference type="InterPro" id="IPR006592">
    <property type="entry name" value="RNA_pol_N"/>
</dbReference>
<dbReference type="InterPro" id="IPR007080">
    <property type="entry name" value="RNA_pol_Rpb1_1"/>
</dbReference>
<dbReference type="InterPro" id="IPR007066">
    <property type="entry name" value="RNA_pol_Rpb1_3"/>
</dbReference>
<dbReference type="InterPro" id="IPR042102">
    <property type="entry name" value="RNA_pol_Rpb1_3_sf"/>
</dbReference>
<dbReference type="InterPro" id="IPR044893">
    <property type="entry name" value="RNA_pol_Rpb1_clamp_domain"/>
</dbReference>
<dbReference type="InterPro" id="IPR034678">
    <property type="entry name" value="RNApol_RpoC1"/>
</dbReference>
<dbReference type="PANTHER" id="PTHR19376">
    <property type="entry name" value="DNA-DIRECTED RNA POLYMERASE"/>
    <property type="match status" value="1"/>
</dbReference>
<dbReference type="PANTHER" id="PTHR19376:SF54">
    <property type="entry name" value="DNA-DIRECTED RNA POLYMERASE SUBUNIT BETA"/>
    <property type="match status" value="1"/>
</dbReference>
<dbReference type="Pfam" id="PF04997">
    <property type="entry name" value="RNA_pol_Rpb1_1"/>
    <property type="match status" value="1"/>
</dbReference>
<dbReference type="Pfam" id="PF00623">
    <property type="entry name" value="RNA_pol_Rpb1_2"/>
    <property type="match status" value="1"/>
</dbReference>
<dbReference type="Pfam" id="PF04983">
    <property type="entry name" value="RNA_pol_Rpb1_3"/>
    <property type="match status" value="1"/>
</dbReference>
<dbReference type="SMART" id="SM00663">
    <property type="entry name" value="RPOLA_N"/>
    <property type="match status" value="1"/>
</dbReference>
<dbReference type="SUPFAM" id="SSF64484">
    <property type="entry name" value="beta and beta-prime subunits of DNA dependent RNA-polymerase"/>
    <property type="match status" value="1"/>
</dbReference>
<name>RPOC1_OSTTA</name>
<geneLocation type="chloroplast"/>
<accession>Q0P3M5</accession>
<proteinExistence type="inferred from homology"/>
<organism>
    <name type="scientific">Ostreococcus tauri</name>
    <dbReference type="NCBI Taxonomy" id="70448"/>
    <lineage>
        <taxon>Eukaryota</taxon>
        <taxon>Viridiplantae</taxon>
        <taxon>Chlorophyta</taxon>
        <taxon>Mamiellophyceae</taxon>
        <taxon>Mamiellales</taxon>
        <taxon>Bathycoccaceae</taxon>
        <taxon>Ostreococcus</taxon>
    </lineage>
</organism>
<reference key="1">
    <citation type="journal article" date="2007" name="Mol. Biol. Evol.">
        <title>The complete chloroplast and mitochondrial DNA sequence of Ostreococcus tauri: organelle genomes of the smallest eukaryote are examples of compaction.</title>
        <authorList>
            <person name="Robbens S."/>
            <person name="Derelle E."/>
            <person name="Ferraz C."/>
            <person name="Wuyts J."/>
            <person name="Moreau H."/>
            <person name="Van de Peer Y."/>
        </authorList>
    </citation>
    <scope>NUCLEOTIDE SEQUENCE [LARGE SCALE GENOMIC DNA]</scope>
    <source>
        <strain>OTTH0595</strain>
    </source>
</reference>
<comment type="function">
    <text evidence="1">DNA-dependent RNA polymerase catalyzes the transcription of DNA into RNA using the four ribonucleoside triphosphates as substrates.</text>
</comment>
<comment type="catalytic activity">
    <reaction evidence="1">
        <text>RNA(n) + a ribonucleoside 5'-triphosphate = RNA(n+1) + diphosphate</text>
        <dbReference type="Rhea" id="RHEA:21248"/>
        <dbReference type="Rhea" id="RHEA-COMP:14527"/>
        <dbReference type="Rhea" id="RHEA-COMP:17342"/>
        <dbReference type="ChEBI" id="CHEBI:33019"/>
        <dbReference type="ChEBI" id="CHEBI:61557"/>
        <dbReference type="ChEBI" id="CHEBI:140395"/>
        <dbReference type="EC" id="2.7.7.6"/>
    </reaction>
</comment>
<comment type="cofactor">
    <cofactor evidence="1">
        <name>Mg(2+)</name>
        <dbReference type="ChEBI" id="CHEBI:18420"/>
    </cofactor>
    <text evidence="1">Binds 1 Mg(2+) ion per subunit.</text>
</comment>
<comment type="cofactor">
    <cofactor evidence="1">
        <name>Zn(2+)</name>
        <dbReference type="ChEBI" id="CHEBI:29105"/>
    </cofactor>
    <text evidence="1">Binds 1 Zn(2+) ion per subunit.</text>
</comment>
<comment type="subunit">
    <text evidence="1">In plastids the minimal PEP RNA polymerase catalytic core is composed of four subunits: alpha, beta, beta', and beta''. When a (nuclear-encoded) sigma factor is associated with the core the holoenzyme is formed, which can initiate transcription.</text>
</comment>
<comment type="subcellular location">
    <subcellularLocation>
        <location evidence="1">Plastid</location>
        <location evidence="1">Chloroplast</location>
    </subcellularLocation>
</comment>
<comment type="similarity">
    <text evidence="1">Belongs to the RNA polymerase beta' chain family. RpoC1 subfamily.</text>
</comment>